<sequence>MGRLNRFRLGKDGRREQASLSRRGFLVTSLGAGVMFGFARPSSANQIFPLDRSLPGDGAFEPTIWCSIAPDGEITVNIIRAEMGQHIGTALARIIADEMEADWSKVRINYVDTDPKWGLMVTGGSWSVWMTWDVFRQAGAATRTAMVEEGARLLGTTPDKCTVASSIVSAGGKQISFGDIVAKGHPSHAFTPEEMAKLPLKPASERRLIGNAELKALDIPAKTNGTAIYGIDAKVEGMLYGRPKMPPTRYGSKVRSVDDTEAKKIKGYVRYLLIDDPSQVVQGWVVVLAESYSAAIRATDALKVEWTPGETIHTSERDIQDRGRELINNKAGGVYIFNDDGVDQAFGSAHTVMDQEYTCASVLHYQLEPTNALAFEKDGVYEIHAGNQWQSLILPTLAKSLQVPESKVILRSYLLGGGFGRRLNGDYMIPAALASKALGGKPVKLILTRSDDMQFDSFRSPSVQRVRMAFDASDRITAMDYQAAAGWPTGVMAEAFMEKGVDGKPYDQFAIAGGDHWYEVGAFRVRALRNDLAEKTFRPGWLRSVSPGWTSWGVECFLDEVAHRQKKDPAQFRLELLTGQGRNKGQAPDSVGGALRQAAVVRRLMEKVNWGKTSLPKDTAMGLATTAGQERGMPTWDRCVAQVHVDRSTGVVTCQKLTILVDAGTVVDPDGAKAQTEGAALWGLSMVLFENTEIVNGMPVDRNLNTYTPLRIADTPEMDIEFLPSTEKPMGLGEPGTTVVGPAIGNAIFNAVGVRLRHMPVRPADVLRGLQNG</sequence>
<keyword id="KW-0997">Cell inner membrane</keyword>
<keyword id="KW-1003">Cell membrane</keyword>
<keyword id="KW-0903">Direct protein sequencing</keyword>
<keyword id="KW-0472">Membrane</keyword>
<keyword id="KW-0560">Oxidoreductase</keyword>
<keyword id="KW-0634">PQQ</keyword>
<keyword id="KW-0732">Signal</keyword>
<accession>P17201</accession>
<proteinExistence type="evidence at protein level"/>
<dbReference type="EC" id="1.2.5.2"/>
<dbReference type="EMBL" id="D00521">
    <property type="protein sequence ID" value="BAA00408.1"/>
    <property type="molecule type" value="Genomic_DNA"/>
</dbReference>
<dbReference type="PIR" id="JU0135">
    <property type="entry name" value="JU0135"/>
</dbReference>
<dbReference type="SMR" id="P17201"/>
<dbReference type="GO" id="GO:0005886">
    <property type="term" value="C:plasma membrane"/>
    <property type="evidence" value="ECO:0007669"/>
    <property type="project" value="UniProtKB-SubCell"/>
</dbReference>
<dbReference type="GO" id="GO:0047113">
    <property type="term" value="F:aldehyde dehydrogenase (quinone) activity"/>
    <property type="evidence" value="ECO:0007669"/>
    <property type="project" value="UniProtKB-EC"/>
</dbReference>
<dbReference type="Gene3D" id="3.90.1170.50">
    <property type="entry name" value="Aldehyde oxidase/xanthine dehydrogenase, a/b hammerhead"/>
    <property type="match status" value="1"/>
</dbReference>
<dbReference type="Gene3D" id="3.30.365.10">
    <property type="entry name" value="Aldehyde oxidase/xanthine dehydrogenase, molybdopterin binding domain"/>
    <property type="match status" value="4"/>
</dbReference>
<dbReference type="InterPro" id="IPR000674">
    <property type="entry name" value="Ald_Oxase/Xan_DH_a/b"/>
</dbReference>
<dbReference type="InterPro" id="IPR008274">
    <property type="entry name" value="AldOxase/xan_DH_MoCoBD1"/>
</dbReference>
<dbReference type="InterPro" id="IPR046867">
    <property type="entry name" value="AldOxase/xan_DH_MoCoBD2"/>
</dbReference>
<dbReference type="InterPro" id="IPR037165">
    <property type="entry name" value="AldOxase/xan_DH_Mopterin-bd_sf"/>
</dbReference>
<dbReference type="InterPro" id="IPR052516">
    <property type="entry name" value="N-heterocyclic_Hydroxylase"/>
</dbReference>
<dbReference type="InterPro" id="IPR012368">
    <property type="entry name" value="OxRdtase_Mopterin-bd_su_IorB"/>
</dbReference>
<dbReference type="InterPro" id="IPR006311">
    <property type="entry name" value="TAT_signal"/>
</dbReference>
<dbReference type="PANTHER" id="PTHR47495">
    <property type="entry name" value="ALDEHYDE DEHYDROGENASE"/>
    <property type="match status" value="1"/>
</dbReference>
<dbReference type="PANTHER" id="PTHR47495:SF2">
    <property type="entry name" value="ALDEHYDE DEHYDROGENASE"/>
    <property type="match status" value="1"/>
</dbReference>
<dbReference type="Pfam" id="PF02738">
    <property type="entry name" value="MoCoBD_1"/>
    <property type="match status" value="1"/>
</dbReference>
<dbReference type="Pfam" id="PF20256">
    <property type="entry name" value="MoCoBD_2"/>
    <property type="match status" value="2"/>
</dbReference>
<dbReference type="PIRSF" id="PIRSF036389">
    <property type="entry name" value="IOR_B"/>
    <property type="match status" value="1"/>
</dbReference>
<dbReference type="SMART" id="SM01008">
    <property type="entry name" value="Ald_Xan_dh_C"/>
    <property type="match status" value="1"/>
</dbReference>
<dbReference type="SUPFAM" id="SSF56003">
    <property type="entry name" value="Molybdenum cofactor-binding domain"/>
    <property type="match status" value="2"/>
</dbReference>
<dbReference type="PROSITE" id="PS51318">
    <property type="entry name" value="TAT"/>
    <property type="match status" value="1"/>
</dbReference>
<organism>
    <name type="scientific">Gluconacetobacter polyoxogenes</name>
    <name type="common">Acetobacter polyoxogenes</name>
    <dbReference type="NCBI Taxonomy" id="439"/>
    <lineage>
        <taxon>Bacteria</taxon>
        <taxon>Pseudomonadati</taxon>
        <taxon>Pseudomonadota</taxon>
        <taxon>Alphaproteobacteria</taxon>
        <taxon>Acetobacterales</taxon>
        <taxon>Acetobacteraceae</taxon>
        <taxon>Gluconacetobacter</taxon>
    </lineage>
</organism>
<evidence type="ECO:0000255" key="1">
    <source>
        <dbReference type="PROSITE-ProRule" id="PRU00648"/>
    </source>
</evidence>
<evidence type="ECO:0000269" key="2">
    <source>
    </source>
</evidence>
<protein>
    <recommendedName>
        <fullName>Membrane-bound aldehyde dehydrogenase [pyrroloquinoline-quinone]</fullName>
        <shortName>ALDH</shortName>
        <ecNumber>1.2.5.2</ecNumber>
    </recommendedName>
</protein>
<reference key="1">
    <citation type="journal article" date="1989" name="J. Biochem.">
        <title>Nucleotide sequence of the membrane-bound aldehyde dehydrogenase gene from Acetobacter polyoxogenes.</title>
        <authorList>
            <person name="Tamaki T."/>
            <person name="Horinouchi S."/>
            <person name="Fukaya M."/>
            <person name="Okumura H."/>
            <person name="Kawamura Y."/>
            <person name="Beppu T."/>
        </authorList>
    </citation>
    <scope>NUCLEOTIDE SEQUENCE [GENOMIC DNA]</scope>
    <scope>PROTEIN SEQUENCE OF 45-60 AND 480-490</scope>
    <source>
        <strain>NBI1028</strain>
    </source>
</reference>
<feature type="signal peptide" description="Tat-type signal" evidence="1 2">
    <location>
        <begin position="1"/>
        <end position="44"/>
    </location>
</feature>
<feature type="chain" id="PRO_0000025582" description="Membrane-bound aldehyde dehydrogenase [pyrroloquinoline-quinone]">
    <location>
        <begin position="45"/>
        <end position="773"/>
    </location>
</feature>
<name>DHAQ_GLUPO</name>
<comment type="catalytic activity">
    <reaction>
        <text>an aldehyde + a quinone + H2O = a quinol + a carboxylate + H(+)</text>
        <dbReference type="Rhea" id="RHEA:13881"/>
        <dbReference type="ChEBI" id="CHEBI:15377"/>
        <dbReference type="ChEBI" id="CHEBI:15378"/>
        <dbReference type="ChEBI" id="CHEBI:17478"/>
        <dbReference type="ChEBI" id="CHEBI:24646"/>
        <dbReference type="ChEBI" id="CHEBI:29067"/>
        <dbReference type="ChEBI" id="CHEBI:132124"/>
        <dbReference type="EC" id="1.2.5.2"/>
    </reaction>
</comment>
<comment type="cofactor">
    <cofactor>
        <name>pyrroloquinoline quinone</name>
        <dbReference type="ChEBI" id="CHEBI:58442"/>
    </cofactor>
</comment>
<comment type="subcellular location">
    <subcellularLocation>
        <location>Cell inner membrane</location>
        <topology>Peripheral membrane protein</topology>
    </subcellularLocation>
</comment>
<comment type="PTM">
    <text>Predicted to be exported by the Tat system. The position of the signal peptide cleavage has been experimentally proven.</text>
</comment>